<organism>
    <name type="scientific">Hahella chejuensis (strain KCTC 2396)</name>
    <dbReference type="NCBI Taxonomy" id="349521"/>
    <lineage>
        <taxon>Bacteria</taxon>
        <taxon>Pseudomonadati</taxon>
        <taxon>Pseudomonadota</taxon>
        <taxon>Gammaproteobacteria</taxon>
        <taxon>Oceanospirillales</taxon>
        <taxon>Hahellaceae</taxon>
        <taxon>Hahella</taxon>
    </lineage>
</organism>
<evidence type="ECO:0000255" key="1">
    <source>
        <dbReference type="HAMAP-Rule" id="MF_01227"/>
    </source>
</evidence>
<name>PYRG_HAHCH</name>
<feature type="chain" id="PRO_0000266132" description="CTP synthase">
    <location>
        <begin position="1"/>
        <end position="542"/>
    </location>
</feature>
<feature type="domain" description="Glutamine amidotransferase type-1" evidence="1">
    <location>
        <begin position="290"/>
        <end position="541"/>
    </location>
</feature>
<feature type="region of interest" description="Amidoligase domain" evidence="1">
    <location>
        <begin position="1"/>
        <end position="265"/>
    </location>
</feature>
<feature type="active site" description="Nucleophile; for glutamine hydrolysis" evidence="1">
    <location>
        <position position="378"/>
    </location>
</feature>
<feature type="active site" evidence="1">
    <location>
        <position position="514"/>
    </location>
</feature>
<feature type="active site" evidence="1">
    <location>
        <position position="516"/>
    </location>
</feature>
<feature type="binding site" evidence="1">
    <location>
        <position position="13"/>
    </location>
    <ligand>
        <name>CTP</name>
        <dbReference type="ChEBI" id="CHEBI:37563"/>
        <note>allosteric inhibitor</note>
    </ligand>
</feature>
<feature type="binding site" evidence="1">
    <location>
        <position position="13"/>
    </location>
    <ligand>
        <name>UTP</name>
        <dbReference type="ChEBI" id="CHEBI:46398"/>
    </ligand>
</feature>
<feature type="binding site" evidence="1">
    <location>
        <begin position="14"/>
        <end position="19"/>
    </location>
    <ligand>
        <name>ATP</name>
        <dbReference type="ChEBI" id="CHEBI:30616"/>
    </ligand>
</feature>
<feature type="binding site" evidence="1">
    <location>
        <position position="71"/>
    </location>
    <ligand>
        <name>ATP</name>
        <dbReference type="ChEBI" id="CHEBI:30616"/>
    </ligand>
</feature>
<feature type="binding site" evidence="1">
    <location>
        <position position="71"/>
    </location>
    <ligand>
        <name>Mg(2+)</name>
        <dbReference type="ChEBI" id="CHEBI:18420"/>
    </ligand>
</feature>
<feature type="binding site" evidence="1">
    <location>
        <position position="139"/>
    </location>
    <ligand>
        <name>Mg(2+)</name>
        <dbReference type="ChEBI" id="CHEBI:18420"/>
    </ligand>
</feature>
<feature type="binding site" evidence="1">
    <location>
        <begin position="146"/>
        <end position="148"/>
    </location>
    <ligand>
        <name>CTP</name>
        <dbReference type="ChEBI" id="CHEBI:37563"/>
        <note>allosteric inhibitor</note>
    </ligand>
</feature>
<feature type="binding site" evidence="1">
    <location>
        <begin position="186"/>
        <end position="191"/>
    </location>
    <ligand>
        <name>CTP</name>
        <dbReference type="ChEBI" id="CHEBI:37563"/>
        <note>allosteric inhibitor</note>
    </ligand>
</feature>
<feature type="binding site" evidence="1">
    <location>
        <begin position="186"/>
        <end position="191"/>
    </location>
    <ligand>
        <name>UTP</name>
        <dbReference type="ChEBI" id="CHEBI:46398"/>
    </ligand>
</feature>
<feature type="binding site" evidence="1">
    <location>
        <position position="222"/>
    </location>
    <ligand>
        <name>CTP</name>
        <dbReference type="ChEBI" id="CHEBI:37563"/>
        <note>allosteric inhibitor</note>
    </ligand>
</feature>
<feature type="binding site" evidence="1">
    <location>
        <position position="222"/>
    </location>
    <ligand>
        <name>UTP</name>
        <dbReference type="ChEBI" id="CHEBI:46398"/>
    </ligand>
</feature>
<feature type="binding site" evidence="1">
    <location>
        <position position="351"/>
    </location>
    <ligand>
        <name>L-glutamine</name>
        <dbReference type="ChEBI" id="CHEBI:58359"/>
    </ligand>
</feature>
<feature type="binding site" evidence="1">
    <location>
        <begin position="379"/>
        <end position="382"/>
    </location>
    <ligand>
        <name>L-glutamine</name>
        <dbReference type="ChEBI" id="CHEBI:58359"/>
    </ligand>
</feature>
<feature type="binding site" evidence="1">
    <location>
        <position position="402"/>
    </location>
    <ligand>
        <name>L-glutamine</name>
        <dbReference type="ChEBI" id="CHEBI:58359"/>
    </ligand>
</feature>
<feature type="binding site" evidence="1">
    <location>
        <position position="469"/>
    </location>
    <ligand>
        <name>L-glutamine</name>
        <dbReference type="ChEBI" id="CHEBI:58359"/>
    </ligand>
</feature>
<accession>Q2SKX2</accession>
<sequence length="542" mass="59904">MTRYIFVTGGVVSSLGKGIASASLAAILEARGLKVTILKLDPYINVDPGTMSPFQHGEVFVTEDGAETDLDLGHYERFIRTTMTKRNNFTTGRVYETVLRKERRGDYLGGTVQVIPHITDEIKRRIVEGAGDADVALVEIGGTVGDIESLPFLEATRQLKVEVGSRRALFMHLTLVPYIATAGEVKTKPTQHSVKEMRSIGLQPDILVCRSEHSIDQSSRRKIALFTNVEERAVIALEDAKSIYSIPMMLHAQGLDEIIVERFGLECGPADLSEWQSVVDNEANPEHEVTIAMVGKYMELLDAYKSLIEALKHAGIRNKTKVNIRYIDSEQVYQQGVDLLKGVDAILVPGGFGERGVEGKIQTVRYARENKIPYLGICLGLQVAVIEYARHVAGMEDAHSTEFNPKSAHPVVGLITEWQDASGKTEQRDEASDLGGTMRLGAQECKLVDGSTVRECYGKAIIEERHRHRYEVNGNLVPRLEEAGLQVAGWSQDGSLVEVVEVKDHPWFVACQFHPEFKSTPRDGHPLFEGFVRAALENAGGK</sequence>
<dbReference type="EC" id="6.3.4.2" evidence="1"/>
<dbReference type="EMBL" id="CP000155">
    <property type="protein sequence ID" value="ABC28702.1"/>
    <property type="molecule type" value="Genomic_DNA"/>
</dbReference>
<dbReference type="RefSeq" id="WP_011395774.1">
    <property type="nucleotide sequence ID" value="NC_007645.1"/>
</dbReference>
<dbReference type="SMR" id="Q2SKX2"/>
<dbReference type="STRING" id="349521.HCH_01865"/>
<dbReference type="MEROPS" id="C26.964"/>
<dbReference type="KEGG" id="hch:HCH_01865"/>
<dbReference type="eggNOG" id="COG0504">
    <property type="taxonomic scope" value="Bacteria"/>
</dbReference>
<dbReference type="HOGENOM" id="CLU_011675_5_0_6"/>
<dbReference type="OrthoDB" id="9801107at2"/>
<dbReference type="UniPathway" id="UPA00159">
    <property type="reaction ID" value="UER00277"/>
</dbReference>
<dbReference type="Proteomes" id="UP000000238">
    <property type="component" value="Chromosome"/>
</dbReference>
<dbReference type="GO" id="GO:0005829">
    <property type="term" value="C:cytosol"/>
    <property type="evidence" value="ECO:0007669"/>
    <property type="project" value="TreeGrafter"/>
</dbReference>
<dbReference type="GO" id="GO:0005524">
    <property type="term" value="F:ATP binding"/>
    <property type="evidence" value="ECO:0007669"/>
    <property type="project" value="UniProtKB-KW"/>
</dbReference>
<dbReference type="GO" id="GO:0003883">
    <property type="term" value="F:CTP synthase activity"/>
    <property type="evidence" value="ECO:0007669"/>
    <property type="project" value="UniProtKB-UniRule"/>
</dbReference>
<dbReference type="GO" id="GO:0004359">
    <property type="term" value="F:glutaminase activity"/>
    <property type="evidence" value="ECO:0007669"/>
    <property type="project" value="RHEA"/>
</dbReference>
<dbReference type="GO" id="GO:0042802">
    <property type="term" value="F:identical protein binding"/>
    <property type="evidence" value="ECO:0007669"/>
    <property type="project" value="TreeGrafter"/>
</dbReference>
<dbReference type="GO" id="GO:0046872">
    <property type="term" value="F:metal ion binding"/>
    <property type="evidence" value="ECO:0007669"/>
    <property type="project" value="UniProtKB-KW"/>
</dbReference>
<dbReference type="GO" id="GO:0044210">
    <property type="term" value="P:'de novo' CTP biosynthetic process"/>
    <property type="evidence" value="ECO:0007669"/>
    <property type="project" value="UniProtKB-UniRule"/>
</dbReference>
<dbReference type="GO" id="GO:0019856">
    <property type="term" value="P:pyrimidine nucleobase biosynthetic process"/>
    <property type="evidence" value="ECO:0007669"/>
    <property type="project" value="TreeGrafter"/>
</dbReference>
<dbReference type="CDD" id="cd03113">
    <property type="entry name" value="CTPS_N"/>
    <property type="match status" value="1"/>
</dbReference>
<dbReference type="CDD" id="cd01746">
    <property type="entry name" value="GATase1_CTP_Synthase"/>
    <property type="match status" value="1"/>
</dbReference>
<dbReference type="FunFam" id="3.40.50.300:FF:000009">
    <property type="entry name" value="CTP synthase"/>
    <property type="match status" value="1"/>
</dbReference>
<dbReference type="FunFam" id="3.40.50.880:FF:000002">
    <property type="entry name" value="CTP synthase"/>
    <property type="match status" value="1"/>
</dbReference>
<dbReference type="Gene3D" id="3.40.50.880">
    <property type="match status" value="1"/>
</dbReference>
<dbReference type="Gene3D" id="3.40.50.300">
    <property type="entry name" value="P-loop containing nucleotide triphosphate hydrolases"/>
    <property type="match status" value="1"/>
</dbReference>
<dbReference type="HAMAP" id="MF_01227">
    <property type="entry name" value="PyrG"/>
    <property type="match status" value="1"/>
</dbReference>
<dbReference type="InterPro" id="IPR029062">
    <property type="entry name" value="Class_I_gatase-like"/>
</dbReference>
<dbReference type="InterPro" id="IPR004468">
    <property type="entry name" value="CTP_synthase"/>
</dbReference>
<dbReference type="InterPro" id="IPR017456">
    <property type="entry name" value="CTP_synthase_N"/>
</dbReference>
<dbReference type="InterPro" id="IPR017926">
    <property type="entry name" value="GATASE"/>
</dbReference>
<dbReference type="InterPro" id="IPR033828">
    <property type="entry name" value="GATase1_CTP_Synthase"/>
</dbReference>
<dbReference type="InterPro" id="IPR027417">
    <property type="entry name" value="P-loop_NTPase"/>
</dbReference>
<dbReference type="NCBIfam" id="NF003792">
    <property type="entry name" value="PRK05380.1"/>
    <property type="match status" value="1"/>
</dbReference>
<dbReference type="NCBIfam" id="TIGR00337">
    <property type="entry name" value="PyrG"/>
    <property type="match status" value="1"/>
</dbReference>
<dbReference type="PANTHER" id="PTHR11550">
    <property type="entry name" value="CTP SYNTHASE"/>
    <property type="match status" value="1"/>
</dbReference>
<dbReference type="PANTHER" id="PTHR11550:SF0">
    <property type="entry name" value="CTP SYNTHASE-RELATED"/>
    <property type="match status" value="1"/>
</dbReference>
<dbReference type="Pfam" id="PF06418">
    <property type="entry name" value="CTP_synth_N"/>
    <property type="match status" value="1"/>
</dbReference>
<dbReference type="Pfam" id="PF00117">
    <property type="entry name" value="GATase"/>
    <property type="match status" value="1"/>
</dbReference>
<dbReference type="SUPFAM" id="SSF52317">
    <property type="entry name" value="Class I glutamine amidotransferase-like"/>
    <property type="match status" value="1"/>
</dbReference>
<dbReference type="SUPFAM" id="SSF52540">
    <property type="entry name" value="P-loop containing nucleoside triphosphate hydrolases"/>
    <property type="match status" value="1"/>
</dbReference>
<dbReference type="PROSITE" id="PS51273">
    <property type="entry name" value="GATASE_TYPE_1"/>
    <property type="match status" value="1"/>
</dbReference>
<reference key="1">
    <citation type="journal article" date="2005" name="Nucleic Acids Res.">
        <title>Genomic blueprint of Hahella chejuensis, a marine microbe producing an algicidal agent.</title>
        <authorList>
            <person name="Jeong H."/>
            <person name="Yim J.H."/>
            <person name="Lee C."/>
            <person name="Choi S.-H."/>
            <person name="Park Y.K."/>
            <person name="Yoon S.H."/>
            <person name="Hur C.-G."/>
            <person name="Kang H.-Y."/>
            <person name="Kim D."/>
            <person name="Lee H.H."/>
            <person name="Park K.H."/>
            <person name="Park S.-H."/>
            <person name="Park H.-S."/>
            <person name="Lee H.K."/>
            <person name="Oh T.K."/>
            <person name="Kim J.F."/>
        </authorList>
    </citation>
    <scope>NUCLEOTIDE SEQUENCE [LARGE SCALE GENOMIC DNA]</scope>
    <source>
        <strain>KCTC 2396</strain>
    </source>
</reference>
<keyword id="KW-0067">ATP-binding</keyword>
<keyword id="KW-0315">Glutamine amidotransferase</keyword>
<keyword id="KW-0436">Ligase</keyword>
<keyword id="KW-0460">Magnesium</keyword>
<keyword id="KW-0479">Metal-binding</keyword>
<keyword id="KW-0547">Nucleotide-binding</keyword>
<keyword id="KW-0665">Pyrimidine biosynthesis</keyword>
<keyword id="KW-1185">Reference proteome</keyword>
<comment type="function">
    <text evidence="1">Catalyzes the ATP-dependent amination of UTP to CTP with either L-glutamine or ammonia as the source of nitrogen. Regulates intracellular CTP levels through interactions with the four ribonucleotide triphosphates.</text>
</comment>
<comment type="catalytic activity">
    <reaction evidence="1">
        <text>UTP + L-glutamine + ATP + H2O = CTP + L-glutamate + ADP + phosphate + 2 H(+)</text>
        <dbReference type="Rhea" id="RHEA:26426"/>
        <dbReference type="ChEBI" id="CHEBI:15377"/>
        <dbReference type="ChEBI" id="CHEBI:15378"/>
        <dbReference type="ChEBI" id="CHEBI:29985"/>
        <dbReference type="ChEBI" id="CHEBI:30616"/>
        <dbReference type="ChEBI" id="CHEBI:37563"/>
        <dbReference type="ChEBI" id="CHEBI:43474"/>
        <dbReference type="ChEBI" id="CHEBI:46398"/>
        <dbReference type="ChEBI" id="CHEBI:58359"/>
        <dbReference type="ChEBI" id="CHEBI:456216"/>
        <dbReference type="EC" id="6.3.4.2"/>
    </reaction>
</comment>
<comment type="catalytic activity">
    <reaction evidence="1">
        <text>L-glutamine + H2O = L-glutamate + NH4(+)</text>
        <dbReference type="Rhea" id="RHEA:15889"/>
        <dbReference type="ChEBI" id="CHEBI:15377"/>
        <dbReference type="ChEBI" id="CHEBI:28938"/>
        <dbReference type="ChEBI" id="CHEBI:29985"/>
        <dbReference type="ChEBI" id="CHEBI:58359"/>
    </reaction>
</comment>
<comment type="catalytic activity">
    <reaction evidence="1">
        <text>UTP + NH4(+) + ATP = CTP + ADP + phosphate + 2 H(+)</text>
        <dbReference type="Rhea" id="RHEA:16597"/>
        <dbReference type="ChEBI" id="CHEBI:15378"/>
        <dbReference type="ChEBI" id="CHEBI:28938"/>
        <dbReference type="ChEBI" id="CHEBI:30616"/>
        <dbReference type="ChEBI" id="CHEBI:37563"/>
        <dbReference type="ChEBI" id="CHEBI:43474"/>
        <dbReference type="ChEBI" id="CHEBI:46398"/>
        <dbReference type="ChEBI" id="CHEBI:456216"/>
    </reaction>
</comment>
<comment type="activity regulation">
    <text evidence="1">Allosterically activated by GTP, when glutamine is the substrate; GTP has no effect on the reaction when ammonia is the substrate. The allosteric effector GTP functions by stabilizing the protein conformation that binds the tetrahedral intermediate(s) formed during glutamine hydrolysis. Inhibited by the product CTP, via allosteric rather than competitive inhibition.</text>
</comment>
<comment type="pathway">
    <text evidence="1">Pyrimidine metabolism; CTP biosynthesis via de novo pathway; CTP from UDP: step 2/2.</text>
</comment>
<comment type="subunit">
    <text evidence="1">Homotetramer.</text>
</comment>
<comment type="miscellaneous">
    <text evidence="1">CTPSs have evolved a hybrid strategy for distinguishing between UTP and CTP. The overlapping regions of the product feedback inhibitory and substrate sites recognize a common feature in both compounds, the triphosphate moiety. To differentiate isosteric substrate and product pyrimidine rings, an additional pocket far from the expected kinase/ligase catalytic site, specifically recognizes the cytosine and ribose portions of the product inhibitor.</text>
</comment>
<comment type="similarity">
    <text evidence="1">Belongs to the CTP synthase family.</text>
</comment>
<gene>
    <name evidence="1" type="primary">pyrG</name>
    <name type="ordered locus">HCH_01865</name>
</gene>
<proteinExistence type="inferred from homology"/>
<protein>
    <recommendedName>
        <fullName evidence="1">CTP synthase</fullName>
        <ecNumber evidence="1">6.3.4.2</ecNumber>
    </recommendedName>
    <alternativeName>
        <fullName evidence="1">Cytidine 5'-triphosphate synthase</fullName>
    </alternativeName>
    <alternativeName>
        <fullName evidence="1">Cytidine triphosphate synthetase</fullName>
        <shortName evidence="1">CTP synthetase</shortName>
        <shortName evidence="1">CTPS</shortName>
    </alternativeName>
    <alternativeName>
        <fullName evidence="1">UTP--ammonia ligase</fullName>
    </alternativeName>
</protein>